<accession>A0PWB0</accession>
<evidence type="ECO:0000255" key="1">
    <source>
        <dbReference type="HAMAP-Rule" id="MF_00115"/>
    </source>
</evidence>
<evidence type="ECO:0000256" key="2">
    <source>
        <dbReference type="SAM" id="MobiDB-lite"/>
    </source>
</evidence>
<name>MSCL_MYCUA</name>
<organism>
    <name type="scientific">Mycobacterium ulcerans (strain Agy99)</name>
    <dbReference type="NCBI Taxonomy" id="362242"/>
    <lineage>
        <taxon>Bacteria</taxon>
        <taxon>Bacillati</taxon>
        <taxon>Actinomycetota</taxon>
        <taxon>Actinomycetes</taxon>
        <taxon>Mycobacteriales</taxon>
        <taxon>Mycobacteriaceae</taxon>
        <taxon>Mycobacterium</taxon>
        <taxon>Mycobacterium ulcerans group</taxon>
    </lineage>
</organism>
<feature type="chain" id="PRO_1000015400" description="Large-conductance mechanosensitive channel">
    <location>
        <begin position="1"/>
        <end position="151"/>
    </location>
</feature>
<feature type="transmembrane region" description="Helical" evidence="1">
    <location>
        <begin position="12"/>
        <end position="32"/>
    </location>
</feature>
<feature type="transmembrane region" description="Helical" evidence="1">
    <location>
        <begin position="71"/>
        <end position="91"/>
    </location>
</feature>
<feature type="region of interest" description="Disordered" evidence="2">
    <location>
        <begin position="125"/>
        <end position="151"/>
    </location>
</feature>
<proteinExistence type="inferred from homology"/>
<comment type="function">
    <text evidence="1">Channel that opens in response to stretch forces in the membrane lipid bilayer. May participate in the regulation of osmotic pressure changes within the cell.</text>
</comment>
<comment type="subunit">
    <text evidence="1">Homopentamer.</text>
</comment>
<comment type="subcellular location">
    <subcellularLocation>
        <location evidence="1">Cell membrane</location>
        <topology evidence="1">Multi-pass membrane protein</topology>
    </subcellularLocation>
</comment>
<comment type="similarity">
    <text evidence="1">Belongs to the MscL family.</text>
</comment>
<dbReference type="EMBL" id="CP000325">
    <property type="protein sequence ID" value="ABL06629.1"/>
    <property type="molecule type" value="Genomic_DNA"/>
</dbReference>
<dbReference type="RefSeq" id="WP_011742224.1">
    <property type="nucleotide sequence ID" value="NC_008611.1"/>
</dbReference>
<dbReference type="SMR" id="A0PWB0"/>
<dbReference type="GeneID" id="34340813"/>
<dbReference type="KEGG" id="mul:MUL_4697"/>
<dbReference type="eggNOG" id="COG1970">
    <property type="taxonomic scope" value="Bacteria"/>
</dbReference>
<dbReference type="HOGENOM" id="CLU_095787_1_1_11"/>
<dbReference type="Proteomes" id="UP000000765">
    <property type="component" value="Chromosome"/>
</dbReference>
<dbReference type="GO" id="GO:0005886">
    <property type="term" value="C:plasma membrane"/>
    <property type="evidence" value="ECO:0007669"/>
    <property type="project" value="UniProtKB-SubCell"/>
</dbReference>
<dbReference type="GO" id="GO:0008381">
    <property type="term" value="F:mechanosensitive monoatomic ion channel activity"/>
    <property type="evidence" value="ECO:0007669"/>
    <property type="project" value="UniProtKB-UniRule"/>
</dbReference>
<dbReference type="Gene3D" id="1.20.5.220">
    <property type="match status" value="1"/>
</dbReference>
<dbReference type="Gene3D" id="1.10.1200.120">
    <property type="entry name" value="Large-conductance mechanosensitive channel, MscL, domain 1"/>
    <property type="match status" value="1"/>
</dbReference>
<dbReference type="HAMAP" id="MF_00115">
    <property type="entry name" value="MscL"/>
    <property type="match status" value="1"/>
</dbReference>
<dbReference type="InterPro" id="IPR019823">
    <property type="entry name" value="Mechanosensitive_channel_CS"/>
</dbReference>
<dbReference type="InterPro" id="IPR001185">
    <property type="entry name" value="MS_channel"/>
</dbReference>
<dbReference type="InterPro" id="IPR037673">
    <property type="entry name" value="MSC/AndL"/>
</dbReference>
<dbReference type="InterPro" id="IPR036019">
    <property type="entry name" value="MscL_channel"/>
</dbReference>
<dbReference type="NCBIfam" id="TIGR00220">
    <property type="entry name" value="mscL"/>
    <property type="match status" value="1"/>
</dbReference>
<dbReference type="NCBIfam" id="NF001842">
    <property type="entry name" value="PRK00567.1-3"/>
    <property type="match status" value="1"/>
</dbReference>
<dbReference type="PANTHER" id="PTHR30266:SF2">
    <property type="entry name" value="LARGE-CONDUCTANCE MECHANOSENSITIVE CHANNEL"/>
    <property type="match status" value="1"/>
</dbReference>
<dbReference type="PANTHER" id="PTHR30266">
    <property type="entry name" value="MECHANOSENSITIVE CHANNEL MSCL"/>
    <property type="match status" value="1"/>
</dbReference>
<dbReference type="Pfam" id="PF01741">
    <property type="entry name" value="MscL"/>
    <property type="match status" value="1"/>
</dbReference>
<dbReference type="PRINTS" id="PR01264">
    <property type="entry name" value="MECHCHANNEL"/>
</dbReference>
<dbReference type="SUPFAM" id="SSF81330">
    <property type="entry name" value="Gated mechanosensitive channel"/>
    <property type="match status" value="1"/>
</dbReference>
<dbReference type="PROSITE" id="PS01327">
    <property type="entry name" value="MSCL"/>
    <property type="match status" value="1"/>
</dbReference>
<protein>
    <recommendedName>
        <fullName evidence="1">Large-conductance mechanosensitive channel</fullName>
    </recommendedName>
</protein>
<sequence length="151" mass="16135">MLKGFKEFLSRGNIVDLAVAVVIGTAFTALVTRFTDSIITPLINRVGVNEQSDLGILKIGIGRGQSIDLNVLLSATINFILVAGVVYFLVVVPYNTLRKKGEVEQADDAQIVLLTEIRDLLAQTNSNSSGRHEAPGTAGTPPPNYGPRADT</sequence>
<gene>
    <name evidence="1" type="primary">mscL</name>
    <name type="ordered locus">MUL_4697</name>
</gene>
<reference key="1">
    <citation type="journal article" date="2007" name="Genome Res.">
        <title>Reductive evolution and niche adaptation inferred from the genome of Mycobacterium ulcerans, the causative agent of Buruli ulcer.</title>
        <authorList>
            <person name="Stinear T.P."/>
            <person name="Seemann T."/>
            <person name="Pidot S."/>
            <person name="Frigui W."/>
            <person name="Reysset G."/>
            <person name="Garnier T."/>
            <person name="Meurice G."/>
            <person name="Simon D."/>
            <person name="Bouchier C."/>
            <person name="Ma L."/>
            <person name="Tichit M."/>
            <person name="Porter J.L."/>
            <person name="Ryan J."/>
            <person name="Johnson P.D.R."/>
            <person name="Davies J.K."/>
            <person name="Jenkin G.A."/>
            <person name="Small P.L.C."/>
            <person name="Jones L.M."/>
            <person name="Tekaia F."/>
            <person name="Laval F."/>
            <person name="Daffe M."/>
            <person name="Parkhill J."/>
            <person name="Cole S.T."/>
        </authorList>
    </citation>
    <scope>NUCLEOTIDE SEQUENCE [LARGE SCALE GENOMIC DNA]</scope>
    <source>
        <strain>Agy99</strain>
    </source>
</reference>
<keyword id="KW-1003">Cell membrane</keyword>
<keyword id="KW-0407">Ion channel</keyword>
<keyword id="KW-0406">Ion transport</keyword>
<keyword id="KW-0472">Membrane</keyword>
<keyword id="KW-0812">Transmembrane</keyword>
<keyword id="KW-1133">Transmembrane helix</keyword>
<keyword id="KW-0813">Transport</keyword>